<proteinExistence type="inferred from homology"/>
<geneLocation type="mitochondrion"/>
<keyword id="KW-0249">Electron transport</keyword>
<keyword id="KW-0349">Heme</keyword>
<keyword id="KW-0408">Iron</keyword>
<keyword id="KW-0472">Membrane</keyword>
<keyword id="KW-0479">Metal-binding</keyword>
<keyword id="KW-0496">Mitochondrion</keyword>
<keyword id="KW-0999">Mitochondrion inner membrane</keyword>
<keyword id="KW-0679">Respiratory chain</keyword>
<keyword id="KW-0812">Transmembrane</keyword>
<keyword id="KW-1133">Transmembrane helix</keyword>
<keyword id="KW-0813">Transport</keyword>
<keyword id="KW-0830">Ubiquinone</keyword>
<protein>
    <recommendedName>
        <fullName>Cytochrome b</fullName>
    </recommendedName>
    <alternativeName>
        <fullName>Complex III subunit 3</fullName>
    </alternativeName>
    <alternativeName>
        <fullName>Complex III subunit III</fullName>
    </alternativeName>
    <alternativeName>
        <fullName>Cytochrome b-c1 complex subunit 3</fullName>
    </alternativeName>
    <alternativeName>
        <fullName>Ubiquinol-cytochrome-c reductase complex cytochrome b subunit</fullName>
    </alternativeName>
</protein>
<sequence>MTNIRKTHPLAKIINNSFIDLPTPSNISAWWNFGSLLGICLILQILTGLFLAMHYTSDTTTAFSSVTHICRDVNYGWIIRYMHANGASMFFICLYMHVGRGLYYGSYTFTETWNIGIILLFTVMATAFMGYVLPWGQMSFWGATVITNLLSAIPYIGTDLVQWIWGGFSVDKATLTRFFAFHFILPFVVSALAAVHLLFLHETGSNNPSGIPSNSDKIPFHPYYTIKDILGALFLILTLMLLVLFSPDLLGDPDNYIPANPLSTPPHIKPEWYFLFAYAILRSIPNKLGGVLALVLSILILAIIPLLHTSKQRGMMFRPISQCLFWLLVADLLTLTWIGGQPVEHPYITIGQLASILYFTILLVLMPITSIIENNILKW</sequence>
<evidence type="ECO:0000250" key="1"/>
<evidence type="ECO:0000250" key="2">
    <source>
        <dbReference type="UniProtKB" id="P00157"/>
    </source>
</evidence>
<evidence type="ECO:0000255" key="3">
    <source>
        <dbReference type="PROSITE-ProRule" id="PRU00967"/>
    </source>
</evidence>
<evidence type="ECO:0000255" key="4">
    <source>
        <dbReference type="PROSITE-ProRule" id="PRU00968"/>
    </source>
</evidence>
<accession>Q34732</accession>
<accession>Q08H85</accession>
<reference key="1">
    <citation type="journal article" date="1995" name="J. Mol. Evol.">
        <title>A molecular view of pinniped relationships with particular emphasis on the true seals.</title>
        <authorList>
            <person name="Arnason U."/>
            <person name="Bodin K."/>
            <person name="Gullberg A."/>
            <person name="Ledje C."/>
            <person name="Mouchaty S."/>
        </authorList>
    </citation>
    <scope>NUCLEOTIDE SEQUENCE [GENOMIC DNA]</scope>
</reference>
<reference key="2">
    <citation type="journal article" date="2004" name="Mol. Phylogenet. Evol.">
        <title>A phylogeny of the extant Phocidae inferred from complete mitochondrial DNA coding regions.</title>
        <authorList>
            <person name="Davis C.S."/>
            <person name="Delisle I."/>
            <person name="Stirling I."/>
            <person name="Siniff D.B."/>
            <person name="Strobeck C."/>
        </authorList>
    </citation>
    <scope>NUCLEOTIDE SEQUENCE [GENOMIC DNA]</scope>
</reference>
<reference key="3">
    <citation type="journal article" date="2006" name="Mol. Phylogenet. Evol.">
        <title>Pinniped phylogeny and a new hypothesis for their origin and dispersal.</title>
        <authorList>
            <person name="Arnason U."/>
            <person name="Gullberg A."/>
            <person name="Janke A."/>
            <person name="Kullberg M."/>
            <person name="Lehman N."/>
            <person name="Petrov E.A."/>
            <person name="Vainola R."/>
        </authorList>
    </citation>
    <scope>NUCLEOTIDE SEQUENCE [GENOMIC DNA]</scope>
</reference>
<dbReference type="EMBL" id="X82297">
    <property type="protein sequence ID" value="CAA57740.1"/>
    <property type="molecule type" value="Genomic_DNA"/>
</dbReference>
<dbReference type="EMBL" id="AY377323">
    <property type="protein sequence ID" value="AAQ95102.1"/>
    <property type="molecule type" value="Genomic_DNA"/>
</dbReference>
<dbReference type="EMBL" id="AM181026">
    <property type="protein sequence ID" value="CAJ57013.1"/>
    <property type="molecule type" value="Genomic_DNA"/>
</dbReference>
<dbReference type="PIR" id="S58464">
    <property type="entry name" value="S58464"/>
</dbReference>
<dbReference type="RefSeq" id="YP_778824.1">
    <property type="nucleotide sequence ID" value="NC_008425.1"/>
</dbReference>
<dbReference type="SMR" id="Q34732"/>
<dbReference type="GeneID" id="4356004"/>
<dbReference type="CTD" id="4519"/>
<dbReference type="GO" id="GO:0005743">
    <property type="term" value="C:mitochondrial inner membrane"/>
    <property type="evidence" value="ECO:0007669"/>
    <property type="project" value="UniProtKB-SubCell"/>
</dbReference>
<dbReference type="GO" id="GO:0045275">
    <property type="term" value="C:respiratory chain complex III"/>
    <property type="evidence" value="ECO:0007669"/>
    <property type="project" value="InterPro"/>
</dbReference>
<dbReference type="GO" id="GO:0046872">
    <property type="term" value="F:metal ion binding"/>
    <property type="evidence" value="ECO:0007669"/>
    <property type="project" value="UniProtKB-KW"/>
</dbReference>
<dbReference type="GO" id="GO:0008121">
    <property type="term" value="F:ubiquinol-cytochrome-c reductase activity"/>
    <property type="evidence" value="ECO:0007669"/>
    <property type="project" value="InterPro"/>
</dbReference>
<dbReference type="GO" id="GO:0006122">
    <property type="term" value="P:mitochondrial electron transport, ubiquinol to cytochrome c"/>
    <property type="evidence" value="ECO:0007669"/>
    <property type="project" value="TreeGrafter"/>
</dbReference>
<dbReference type="CDD" id="cd00290">
    <property type="entry name" value="cytochrome_b_C"/>
    <property type="match status" value="1"/>
</dbReference>
<dbReference type="CDD" id="cd00284">
    <property type="entry name" value="Cytochrome_b_N"/>
    <property type="match status" value="1"/>
</dbReference>
<dbReference type="FunFam" id="1.20.810.10:FF:000002">
    <property type="entry name" value="Cytochrome b"/>
    <property type="match status" value="1"/>
</dbReference>
<dbReference type="Gene3D" id="1.20.810.10">
    <property type="entry name" value="Cytochrome Bc1 Complex, Chain C"/>
    <property type="match status" value="1"/>
</dbReference>
<dbReference type="InterPro" id="IPR005798">
    <property type="entry name" value="Cyt_b/b6_C"/>
</dbReference>
<dbReference type="InterPro" id="IPR036150">
    <property type="entry name" value="Cyt_b/b6_C_sf"/>
</dbReference>
<dbReference type="InterPro" id="IPR005797">
    <property type="entry name" value="Cyt_b/b6_N"/>
</dbReference>
<dbReference type="InterPro" id="IPR027387">
    <property type="entry name" value="Cytb/b6-like_sf"/>
</dbReference>
<dbReference type="InterPro" id="IPR030689">
    <property type="entry name" value="Cytochrome_b"/>
</dbReference>
<dbReference type="InterPro" id="IPR048260">
    <property type="entry name" value="Cytochrome_b_C_euk/bac"/>
</dbReference>
<dbReference type="InterPro" id="IPR048259">
    <property type="entry name" value="Cytochrome_b_N_euk/bac"/>
</dbReference>
<dbReference type="InterPro" id="IPR016174">
    <property type="entry name" value="Di-haem_cyt_TM"/>
</dbReference>
<dbReference type="PANTHER" id="PTHR19271">
    <property type="entry name" value="CYTOCHROME B"/>
    <property type="match status" value="1"/>
</dbReference>
<dbReference type="PANTHER" id="PTHR19271:SF16">
    <property type="entry name" value="CYTOCHROME B"/>
    <property type="match status" value="1"/>
</dbReference>
<dbReference type="Pfam" id="PF00032">
    <property type="entry name" value="Cytochrom_B_C"/>
    <property type="match status" value="1"/>
</dbReference>
<dbReference type="Pfam" id="PF00033">
    <property type="entry name" value="Cytochrome_B"/>
    <property type="match status" value="1"/>
</dbReference>
<dbReference type="PIRSF" id="PIRSF038885">
    <property type="entry name" value="COB"/>
    <property type="match status" value="1"/>
</dbReference>
<dbReference type="SUPFAM" id="SSF81648">
    <property type="entry name" value="a domain/subunit of cytochrome bc1 complex (Ubiquinol-cytochrome c reductase)"/>
    <property type="match status" value="1"/>
</dbReference>
<dbReference type="SUPFAM" id="SSF81342">
    <property type="entry name" value="Transmembrane di-heme cytochromes"/>
    <property type="match status" value="1"/>
</dbReference>
<dbReference type="PROSITE" id="PS51003">
    <property type="entry name" value="CYTB_CTER"/>
    <property type="match status" value="1"/>
</dbReference>
<dbReference type="PROSITE" id="PS51002">
    <property type="entry name" value="CYTB_NTER"/>
    <property type="match status" value="1"/>
</dbReference>
<gene>
    <name type="primary">MT-CYB</name>
    <name type="synonym">COB</name>
    <name type="synonym">CYTB</name>
    <name type="synonym">MTCYB</name>
</gene>
<name>CYB_HYDLE</name>
<feature type="chain" id="PRO_0000061048" description="Cytochrome b">
    <location>
        <begin position="1"/>
        <end position="379"/>
    </location>
</feature>
<feature type="transmembrane region" description="Helical" evidence="2">
    <location>
        <begin position="33"/>
        <end position="53"/>
    </location>
</feature>
<feature type="transmembrane region" description="Helical" evidence="2">
    <location>
        <begin position="77"/>
        <end position="98"/>
    </location>
</feature>
<feature type="transmembrane region" description="Helical" evidence="2">
    <location>
        <begin position="113"/>
        <end position="133"/>
    </location>
</feature>
<feature type="transmembrane region" description="Helical" evidence="2">
    <location>
        <begin position="178"/>
        <end position="198"/>
    </location>
</feature>
<feature type="transmembrane region" description="Helical" evidence="2">
    <location>
        <begin position="226"/>
        <end position="246"/>
    </location>
</feature>
<feature type="transmembrane region" description="Helical" evidence="2">
    <location>
        <begin position="288"/>
        <end position="308"/>
    </location>
</feature>
<feature type="transmembrane region" description="Helical" evidence="2">
    <location>
        <begin position="320"/>
        <end position="340"/>
    </location>
</feature>
<feature type="transmembrane region" description="Helical" evidence="2">
    <location>
        <begin position="347"/>
        <end position="367"/>
    </location>
</feature>
<feature type="binding site" description="axial binding residue" evidence="2">
    <location>
        <position position="83"/>
    </location>
    <ligand>
        <name>heme b</name>
        <dbReference type="ChEBI" id="CHEBI:60344"/>
        <label>b562</label>
    </ligand>
    <ligandPart>
        <name>Fe</name>
        <dbReference type="ChEBI" id="CHEBI:18248"/>
    </ligandPart>
</feature>
<feature type="binding site" description="axial binding residue" evidence="2">
    <location>
        <position position="97"/>
    </location>
    <ligand>
        <name>heme b</name>
        <dbReference type="ChEBI" id="CHEBI:60344"/>
        <label>b566</label>
    </ligand>
    <ligandPart>
        <name>Fe</name>
        <dbReference type="ChEBI" id="CHEBI:18248"/>
    </ligandPart>
</feature>
<feature type="binding site" description="axial binding residue" evidence="2">
    <location>
        <position position="182"/>
    </location>
    <ligand>
        <name>heme b</name>
        <dbReference type="ChEBI" id="CHEBI:60344"/>
        <label>b562</label>
    </ligand>
    <ligandPart>
        <name>Fe</name>
        <dbReference type="ChEBI" id="CHEBI:18248"/>
    </ligandPart>
</feature>
<feature type="binding site" description="axial binding residue" evidence="2">
    <location>
        <position position="196"/>
    </location>
    <ligand>
        <name>heme b</name>
        <dbReference type="ChEBI" id="CHEBI:60344"/>
        <label>b566</label>
    </ligand>
    <ligandPart>
        <name>Fe</name>
        <dbReference type="ChEBI" id="CHEBI:18248"/>
    </ligandPart>
</feature>
<feature type="binding site" evidence="2">
    <location>
        <position position="201"/>
    </location>
    <ligand>
        <name>a ubiquinone</name>
        <dbReference type="ChEBI" id="CHEBI:16389"/>
    </ligand>
</feature>
<organism>
    <name type="scientific">Hydrurga leptonyx</name>
    <name type="common">Leopard seal</name>
    <name type="synonym">Phoca leptonyx</name>
    <dbReference type="NCBI Taxonomy" id="29086"/>
    <lineage>
        <taxon>Eukaryota</taxon>
        <taxon>Metazoa</taxon>
        <taxon>Chordata</taxon>
        <taxon>Craniata</taxon>
        <taxon>Vertebrata</taxon>
        <taxon>Euteleostomi</taxon>
        <taxon>Mammalia</taxon>
        <taxon>Eutheria</taxon>
        <taxon>Laurasiatheria</taxon>
        <taxon>Carnivora</taxon>
        <taxon>Caniformia</taxon>
        <taxon>Pinnipedia</taxon>
        <taxon>Phocidae</taxon>
        <taxon>Monachinae</taxon>
        <taxon>Lobodontini</taxon>
        <taxon>Hydrurga</taxon>
    </lineage>
</organism>
<comment type="function">
    <text evidence="2">Component of the ubiquinol-cytochrome c reductase complex (complex III or cytochrome b-c1 complex) that is part of the mitochondrial respiratory chain. The b-c1 complex mediates electron transfer from ubiquinol to cytochrome c. Contributes to the generation of a proton gradient across the mitochondrial membrane that is then used for ATP synthesis.</text>
</comment>
<comment type="cofactor">
    <cofactor evidence="2">
        <name>heme b</name>
        <dbReference type="ChEBI" id="CHEBI:60344"/>
    </cofactor>
    <text evidence="2">Binds 2 heme b groups non-covalently.</text>
</comment>
<comment type="subunit">
    <text evidence="2">The cytochrome bc1 complex contains 11 subunits: 3 respiratory subunits (MT-CYB, CYC1 and UQCRFS1), 2 core proteins (UQCRC1 and UQCRC2) and 6 low-molecular weight proteins (UQCRH/QCR6, UQCRB/QCR7, UQCRQ/QCR8, UQCR10/QCR9, UQCR11/QCR10 and a cleavage product of UQCRFS1). This cytochrome bc1 complex then forms a dimer.</text>
</comment>
<comment type="subcellular location">
    <subcellularLocation>
        <location evidence="2">Mitochondrion inner membrane</location>
        <topology evidence="2">Multi-pass membrane protein</topology>
    </subcellularLocation>
</comment>
<comment type="miscellaneous">
    <text evidence="1">Heme 1 (or BL or b562) is low-potential and absorbs at about 562 nm, and heme 2 (or BH or b566) is high-potential and absorbs at about 566 nm.</text>
</comment>
<comment type="similarity">
    <text evidence="3 4">Belongs to the cytochrome b family.</text>
</comment>
<comment type="caution">
    <text evidence="2">The full-length protein contains only eight transmembrane helices, not nine as predicted by bioinformatics tools.</text>
</comment>